<keyword id="KW-0227">DNA damage</keyword>
<keyword id="KW-0233">DNA recombination</keyword>
<keyword id="KW-0234">DNA repair</keyword>
<sequence length="243" mass="27509">MDGWERAFVLHGRPYSETSLMLDMFTEGHGRVRLLAKGARSRRSNLKGCLQPFTPLLVRWGGRGEVKTLRSAEAVSLGLPLSGMMLYSGLYVNELLSRVLEQEANYSVLFFDYLQCLQALAAEDVSPEQALRQFELALLNHLGYGLDFLHCAGSGLPVDDGMTYRYREEKGFIASLVVDHYSFTGRELRALAERQFPDVQTLRAAKRFTRMALKPYLGGKPLKSRELFRQFVRKQPDPPVDDA</sequence>
<name>RECO_SERP5</name>
<gene>
    <name evidence="1" type="primary">recO</name>
    <name type="ordered locus">Spro_3667</name>
</gene>
<comment type="function">
    <text evidence="1">Involved in DNA repair and RecF pathway recombination.</text>
</comment>
<comment type="similarity">
    <text evidence="1">Belongs to the RecO family.</text>
</comment>
<feature type="chain" id="PRO_1000058568" description="DNA repair protein RecO">
    <location>
        <begin position="1"/>
        <end position="243"/>
    </location>
</feature>
<reference key="1">
    <citation type="submission" date="2007-09" db="EMBL/GenBank/DDBJ databases">
        <title>Complete sequence of chromosome of Serratia proteamaculans 568.</title>
        <authorList>
            <consortium name="US DOE Joint Genome Institute"/>
            <person name="Copeland A."/>
            <person name="Lucas S."/>
            <person name="Lapidus A."/>
            <person name="Barry K."/>
            <person name="Glavina del Rio T."/>
            <person name="Dalin E."/>
            <person name="Tice H."/>
            <person name="Pitluck S."/>
            <person name="Chain P."/>
            <person name="Malfatti S."/>
            <person name="Shin M."/>
            <person name="Vergez L."/>
            <person name="Schmutz J."/>
            <person name="Larimer F."/>
            <person name="Land M."/>
            <person name="Hauser L."/>
            <person name="Kyrpides N."/>
            <person name="Kim E."/>
            <person name="Taghavi S."/>
            <person name="Newman L."/>
            <person name="Vangronsveld J."/>
            <person name="van der Lelie D."/>
            <person name="Richardson P."/>
        </authorList>
    </citation>
    <scope>NUCLEOTIDE SEQUENCE [LARGE SCALE GENOMIC DNA]</scope>
    <source>
        <strain>568</strain>
    </source>
</reference>
<proteinExistence type="inferred from homology"/>
<dbReference type="EMBL" id="CP000826">
    <property type="protein sequence ID" value="ABV42763.1"/>
    <property type="molecule type" value="Genomic_DNA"/>
</dbReference>
<dbReference type="SMR" id="A8GI23"/>
<dbReference type="STRING" id="399741.Spro_3667"/>
<dbReference type="KEGG" id="spe:Spro_3667"/>
<dbReference type="eggNOG" id="COG1381">
    <property type="taxonomic scope" value="Bacteria"/>
</dbReference>
<dbReference type="HOGENOM" id="CLU_066645_1_0_6"/>
<dbReference type="OrthoDB" id="9804792at2"/>
<dbReference type="GO" id="GO:0043590">
    <property type="term" value="C:bacterial nucleoid"/>
    <property type="evidence" value="ECO:0007669"/>
    <property type="project" value="TreeGrafter"/>
</dbReference>
<dbReference type="GO" id="GO:0006310">
    <property type="term" value="P:DNA recombination"/>
    <property type="evidence" value="ECO:0007669"/>
    <property type="project" value="UniProtKB-UniRule"/>
</dbReference>
<dbReference type="GO" id="GO:0006302">
    <property type="term" value="P:double-strand break repair"/>
    <property type="evidence" value="ECO:0007669"/>
    <property type="project" value="TreeGrafter"/>
</dbReference>
<dbReference type="Gene3D" id="2.40.50.140">
    <property type="entry name" value="Nucleic acid-binding proteins"/>
    <property type="match status" value="1"/>
</dbReference>
<dbReference type="Gene3D" id="1.20.1440.120">
    <property type="entry name" value="Recombination protein O, C-terminal domain"/>
    <property type="match status" value="1"/>
</dbReference>
<dbReference type="HAMAP" id="MF_00201">
    <property type="entry name" value="RecO"/>
    <property type="match status" value="1"/>
</dbReference>
<dbReference type="InterPro" id="IPR037278">
    <property type="entry name" value="ARFGAP/RecO"/>
</dbReference>
<dbReference type="InterPro" id="IPR022572">
    <property type="entry name" value="DNA_rep/recomb_RecO_N"/>
</dbReference>
<dbReference type="InterPro" id="IPR012340">
    <property type="entry name" value="NA-bd_OB-fold"/>
</dbReference>
<dbReference type="InterPro" id="IPR003717">
    <property type="entry name" value="RecO"/>
</dbReference>
<dbReference type="InterPro" id="IPR042242">
    <property type="entry name" value="RecO_C"/>
</dbReference>
<dbReference type="NCBIfam" id="TIGR00613">
    <property type="entry name" value="reco"/>
    <property type="match status" value="1"/>
</dbReference>
<dbReference type="PANTHER" id="PTHR33991">
    <property type="entry name" value="DNA REPAIR PROTEIN RECO"/>
    <property type="match status" value="1"/>
</dbReference>
<dbReference type="PANTHER" id="PTHR33991:SF1">
    <property type="entry name" value="DNA REPAIR PROTEIN RECO"/>
    <property type="match status" value="1"/>
</dbReference>
<dbReference type="Pfam" id="PF02565">
    <property type="entry name" value="RecO_C"/>
    <property type="match status" value="1"/>
</dbReference>
<dbReference type="Pfam" id="PF11967">
    <property type="entry name" value="RecO_N"/>
    <property type="match status" value="1"/>
</dbReference>
<dbReference type="SUPFAM" id="SSF57863">
    <property type="entry name" value="ArfGap/RecO-like zinc finger"/>
    <property type="match status" value="1"/>
</dbReference>
<dbReference type="SUPFAM" id="SSF50249">
    <property type="entry name" value="Nucleic acid-binding proteins"/>
    <property type="match status" value="1"/>
</dbReference>
<evidence type="ECO:0000255" key="1">
    <source>
        <dbReference type="HAMAP-Rule" id="MF_00201"/>
    </source>
</evidence>
<organism>
    <name type="scientific">Serratia proteamaculans (strain 568)</name>
    <dbReference type="NCBI Taxonomy" id="399741"/>
    <lineage>
        <taxon>Bacteria</taxon>
        <taxon>Pseudomonadati</taxon>
        <taxon>Pseudomonadota</taxon>
        <taxon>Gammaproteobacteria</taxon>
        <taxon>Enterobacterales</taxon>
        <taxon>Yersiniaceae</taxon>
        <taxon>Serratia</taxon>
    </lineage>
</organism>
<protein>
    <recommendedName>
        <fullName evidence="1">DNA repair protein RecO</fullName>
    </recommendedName>
    <alternativeName>
        <fullName evidence="1">Recombination protein O</fullName>
    </alternativeName>
</protein>
<accession>A8GI23</accession>